<protein>
    <recommendedName>
        <fullName evidence="1">NADPH-dependent 7-cyano-7-deazaguanine reductase</fullName>
        <ecNumber evidence="1">1.7.1.13</ecNumber>
    </recommendedName>
    <alternativeName>
        <fullName evidence="1">7-cyano-7-carbaguanine reductase</fullName>
    </alternativeName>
    <alternativeName>
        <fullName evidence="1">NADPH-dependent nitrile oxidoreductase</fullName>
    </alternativeName>
    <alternativeName>
        <fullName evidence="1">PreQ(0) reductase</fullName>
    </alternativeName>
</protein>
<sequence>MNPEHSPLGKATVYAAQYDASLLFPIPRAGAREQLGITSALPFFGTDIWNAYELSWLNARGKPQVAVATFYVPAESPNIVESKSFKLYLGSFAQSKFDSLDAVRDTLKRDVSAACGASVSVQLVSPHDFGKLQMEELDGLSLDRLDLDTDVYEPDPSLLSAAQDEAPVEETLVSDLLRSNCPVTGQPDWGSVQIHYVGPQIDHAGLLRYIISFRNHTGFHEQCVERIFLDILHACKPLKLAVYARYTRRGGLDINPFRTNYNQPMPDNARTARQ</sequence>
<organism>
    <name type="scientific">Burkholderia ambifaria (strain ATCC BAA-244 / DSM 16087 / CCUG 44356 / LMG 19182 / AMMD)</name>
    <name type="common">Burkholderia cepacia (strain AMMD)</name>
    <dbReference type="NCBI Taxonomy" id="339670"/>
    <lineage>
        <taxon>Bacteria</taxon>
        <taxon>Pseudomonadati</taxon>
        <taxon>Pseudomonadota</taxon>
        <taxon>Betaproteobacteria</taxon>
        <taxon>Burkholderiales</taxon>
        <taxon>Burkholderiaceae</taxon>
        <taxon>Burkholderia</taxon>
        <taxon>Burkholderia cepacia complex</taxon>
    </lineage>
</organism>
<evidence type="ECO:0000255" key="1">
    <source>
        <dbReference type="HAMAP-Rule" id="MF_00817"/>
    </source>
</evidence>
<dbReference type="EC" id="1.7.1.13" evidence="1"/>
<dbReference type="EMBL" id="CP000440">
    <property type="protein sequence ID" value="ABI88344.1"/>
    <property type="molecule type" value="Genomic_DNA"/>
</dbReference>
<dbReference type="RefSeq" id="WP_011657907.1">
    <property type="nucleotide sequence ID" value="NZ_CP009798.1"/>
</dbReference>
<dbReference type="SMR" id="Q0BBX9"/>
<dbReference type="GeneID" id="93085011"/>
<dbReference type="KEGG" id="bam:Bamb_2788"/>
<dbReference type="PATRIC" id="fig|339670.21.peg.2102"/>
<dbReference type="eggNOG" id="COG0780">
    <property type="taxonomic scope" value="Bacteria"/>
</dbReference>
<dbReference type="eggNOG" id="COG2904">
    <property type="taxonomic scope" value="Bacteria"/>
</dbReference>
<dbReference type="UniPathway" id="UPA00392"/>
<dbReference type="Proteomes" id="UP000000662">
    <property type="component" value="Chromosome 1"/>
</dbReference>
<dbReference type="GO" id="GO:0005737">
    <property type="term" value="C:cytoplasm"/>
    <property type="evidence" value="ECO:0007669"/>
    <property type="project" value="UniProtKB-SubCell"/>
</dbReference>
<dbReference type="GO" id="GO:0033739">
    <property type="term" value="F:preQ1 synthase activity"/>
    <property type="evidence" value="ECO:0007669"/>
    <property type="project" value="UniProtKB-UniRule"/>
</dbReference>
<dbReference type="GO" id="GO:0008616">
    <property type="term" value="P:queuosine biosynthetic process"/>
    <property type="evidence" value="ECO:0007669"/>
    <property type="project" value="UniProtKB-UniRule"/>
</dbReference>
<dbReference type="GO" id="GO:0006400">
    <property type="term" value="P:tRNA modification"/>
    <property type="evidence" value="ECO:0007669"/>
    <property type="project" value="UniProtKB-UniRule"/>
</dbReference>
<dbReference type="Gene3D" id="3.30.1130.10">
    <property type="match status" value="2"/>
</dbReference>
<dbReference type="HAMAP" id="MF_00817">
    <property type="entry name" value="QueF_type2"/>
    <property type="match status" value="1"/>
</dbReference>
<dbReference type="InterPro" id="IPR043133">
    <property type="entry name" value="GTP-CH-I_C/QueF"/>
</dbReference>
<dbReference type="InterPro" id="IPR050084">
    <property type="entry name" value="NADPH_dep_7-cyano-7-deazaG_red"/>
</dbReference>
<dbReference type="InterPro" id="IPR029500">
    <property type="entry name" value="QueF"/>
</dbReference>
<dbReference type="InterPro" id="IPR029139">
    <property type="entry name" value="QueF_N"/>
</dbReference>
<dbReference type="InterPro" id="IPR016428">
    <property type="entry name" value="QueF_type2"/>
</dbReference>
<dbReference type="NCBIfam" id="TIGR03138">
    <property type="entry name" value="QueF"/>
    <property type="match status" value="1"/>
</dbReference>
<dbReference type="PANTHER" id="PTHR34354">
    <property type="entry name" value="NADPH-DEPENDENT 7-CYANO-7-DEAZAGUANINE REDUCTASE"/>
    <property type="match status" value="1"/>
</dbReference>
<dbReference type="PANTHER" id="PTHR34354:SF1">
    <property type="entry name" value="NADPH-DEPENDENT 7-CYANO-7-DEAZAGUANINE REDUCTASE"/>
    <property type="match status" value="1"/>
</dbReference>
<dbReference type="Pfam" id="PF14489">
    <property type="entry name" value="QueF"/>
    <property type="match status" value="1"/>
</dbReference>
<dbReference type="Pfam" id="PF14819">
    <property type="entry name" value="QueF_N"/>
    <property type="match status" value="1"/>
</dbReference>
<dbReference type="PIRSF" id="PIRSF004750">
    <property type="entry name" value="Nitrile_oxidored_YqcD_prd"/>
    <property type="match status" value="1"/>
</dbReference>
<dbReference type="SUPFAM" id="SSF55620">
    <property type="entry name" value="Tetrahydrobiopterin biosynthesis enzymes-like"/>
    <property type="match status" value="1"/>
</dbReference>
<gene>
    <name evidence="1" type="primary">queF</name>
    <name type="ordered locus">Bamb_2788</name>
</gene>
<reference key="1">
    <citation type="submission" date="2006-08" db="EMBL/GenBank/DDBJ databases">
        <title>Complete sequence of chromosome 1 of Burkholderia cepacia AMMD.</title>
        <authorList>
            <person name="Copeland A."/>
            <person name="Lucas S."/>
            <person name="Lapidus A."/>
            <person name="Barry K."/>
            <person name="Detter J.C."/>
            <person name="Glavina del Rio T."/>
            <person name="Hammon N."/>
            <person name="Israni S."/>
            <person name="Pitluck S."/>
            <person name="Bruce D."/>
            <person name="Chain P."/>
            <person name="Malfatti S."/>
            <person name="Shin M."/>
            <person name="Vergez L."/>
            <person name="Schmutz J."/>
            <person name="Larimer F."/>
            <person name="Land M."/>
            <person name="Hauser L."/>
            <person name="Kyrpides N."/>
            <person name="Kim E."/>
            <person name="Parke J."/>
            <person name="Coenye T."/>
            <person name="Konstantinidis K."/>
            <person name="Ramette A."/>
            <person name="Tiedje J."/>
            <person name="Richardson P."/>
        </authorList>
    </citation>
    <scope>NUCLEOTIDE SEQUENCE [LARGE SCALE GENOMIC DNA]</scope>
    <source>
        <strain>ATCC BAA-244 / DSM 16087 / CCUG 44356 / LMG 19182 / AMMD</strain>
    </source>
</reference>
<keyword id="KW-0963">Cytoplasm</keyword>
<keyword id="KW-0521">NADP</keyword>
<keyword id="KW-0560">Oxidoreductase</keyword>
<keyword id="KW-0671">Queuosine biosynthesis</keyword>
<feature type="chain" id="PRO_1000062329" description="NADPH-dependent 7-cyano-7-deazaguanine reductase">
    <location>
        <begin position="1"/>
        <end position="274"/>
    </location>
</feature>
<feature type="active site" description="Thioimide intermediate" evidence="1">
    <location>
        <position position="181"/>
    </location>
</feature>
<feature type="active site" description="Proton donor" evidence="1">
    <location>
        <position position="188"/>
    </location>
</feature>
<feature type="binding site" evidence="1">
    <location>
        <begin position="80"/>
        <end position="82"/>
    </location>
    <ligand>
        <name>substrate</name>
    </ligand>
</feature>
<feature type="binding site" evidence="1">
    <location>
        <begin position="82"/>
        <end position="83"/>
    </location>
    <ligand>
        <name>NADPH</name>
        <dbReference type="ChEBI" id="CHEBI:57783"/>
    </ligand>
</feature>
<feature type="binding site" evidence="1">
    <location>
        <begin position="220"/>
        <end position="221"/>
    </location>
    <ligand>
        <name>substrate</name>
    </ligand>
</feature>
<feature type="binding site" evidence="1">
    <location>
        <begin position="249"/>
        <end position="250"/>
    </location>
    <ligand>
        <name>NADPH</name>
        <dbReference type="ChEBI" id="CHEBI:57783"/>
    </ligand>
</feature>
<proteinExistence type="inferred from homology"/>
<comment type="function">
    <text evidence="1">Catalyzes the NADPH-dependent reduction of 7-cyano-7-deazaguanine (preQ0) to 7-aminomethyl-7-deazaguanine (preQ1).</text>
</comment>
<comment type="catalytic activity">
    <reaction evidence="1">
        <text>7-aminomethyl-7-carbaguanine + 2 NADP(+) = 7-cyano-7-deazaguanine + 2 NADPH + 3 H(+)</text>
        <dbReference type="Rhea" id="RHEA:13409"/>
        <dbReference type="ChEBI" id="CHEBI:15378"/>
        <dbReference type="ChEBI" id="CHEBI:45075"/>
        <dbReference type="ChEBI" id="CHEBI:57783"/>
        <dbReference type="ChEBI" id="CHEBI:58349"/>
        <dbReference type="ChEBI" id="CHEBI:58703"/>
        <dbReference type="EC" id="1.7.1.13"/>
    </reaction>
</comment>
<comment type="pathway">
    <text evidence="1">tRNA modification; tRNA-queuosine biosynthesis.</text>
</comment>
<comment type="subunit">
    <text evidence="1">Homodimer.</text>
</comment>
<comment type="subcellular location">
    <subcellularLocation>
        <location evidence="1">Cytoplasm</location>
    </subcellularLocation>
</comment>
<comment type="similarity">
    <text evidence="1">Belongs to the GTP cyclohydrolase I family. QueF type 2 subfamily.</text>
</comment>
<accession>Q0BBX9</accession>
<name>QUEF_BURCM</name>